<accession>Q8HY17</accession>
<accession>A7YKU2</accession>
<sequence>MAKRPLLLLLLAVWVLAGELWLRTEARASPYGVKLCGREFIRAVIFTCGGSRWRRSDMLAHEALGDVFSDTDSNADSELDEAMASSEWLALTKSPETFYGVQPGWQRTPGALRGSRDVLAGLSSNCCKWGCSKSEISSLC</sequence>
<organism>
    <name type="scientific">Sus scrofa</name>
    <name type="common">Pig</name>
    <dbReference type="NCBI Taxonomy" id="9823"/>
    <lineage>
        <taxon>Eukaryota</taxon>
        <taxon>Metazoa</taxon>
        <taxon>Chordata</taxon>
        <taxon>Craniata</taxon>
        <taxon>Vertebrata</taxon>
        <taxon>Euteleostomi</taxon>
        <taxon>Mammalia</taxon>
        <taxon>Eutheria</taxon>
        <taxon>Laurasiatheria</taxon>
        <taxon>Artiodactyla</taxon>
        <taxon>Suina</taxon>
        <taxon>Suidae</taxon>
        <taxon>Sus</taxon>
    </lineage>
</organism>
<keyword id="KW-0165">Cleavage on pair of basic residues</keyword>
<keyword id="KW-0903">Direct protein sequencing</keyword>
<keyword id="KW-1015">Disulfide bond</keyword>
<keyword id="KW-0372">Hormone</keyword>
<keyword id="KW-1185">Reference proteome</keyword>
<keyword id="KW-0964">Secreted</keyword>
<keyword id="KW-0732">Signal</keyword>
<reference key="1">
    <citation type="journal article" date="2003" name="Regul. Pept.">
        <title>Production of recombinant human relaxin 3 in AtT20 cells.</title>
        <authorList>
            <person name="Kizawa H."/>
            <person name="Nishi K."/>
            <person name="Ishibashi Y."/>
            <person name="Harada M."/>
            <person name="Asano T."/>
            <person name="Ito Y."/>
            <person name="Suzuki N."/>
            <person name="Hinuma S."/>
            <person name="Fujisawa Y."/>
            <person name="Onda H."/>
            <person name="Nishimura O."/>
            <person name="Fujino M."/>
        </authorList>
    </citation>
    <scope>NUCLEOTIDE SEQUENCE [GENOMIC DNA]</scope>
</reference>
<reference key="2">
    <citation type="submission" date="2006-08" db="EMBL/GenBank/DDBJ databases">
        <title>Comparing the expression of two different relaxin genes in pig and the association of RLN1 and RLN3 to teat development in pigs.</title>
        <authorList>
            <person name="Chomdej S."/>
            <person name="Yammuen-Art S."/>
            <person name="Jonas E."/>
            <person name="Jennen D."/>
            <person name="Ponsuksili S."/>
            <person name="Schellander K."/>
            <person name="Wimmers K."/>
        </authorList>
    </citation>
    <scope>NUCLEOTIDE SEQUENCE [GENOMIC DNA]</scope>
</reference>
<reference key="3">
    <citation type="journal article" date="2003" name="J. Biol. Chem.">
        <title>H3 relaxin is a specific ligand for LGR7 and activates the receptor by interacting with both the ectodomain and the exoloop 2.</title>
        <authorList>
            <person name="Sudo S."/>
            <person name="Kumagai J."/>
            <person name="Nishi S."/>
            <person name="Layfield S."/>
            <person name="Ferraro T."/>
            <person name="Bathgate R.A.D."/>
            <person name="Hsueh A.J.W."/>
        </authorList>
    </citation>
    <scope>INTERACTION WITH LGR7</scope>
</reference>
<reference key="4">
    <citation type="journal article" date="2003" name="J. Biol. Chem.">
        <title>Identification of relaxin-3/INSL7 as an endogenous ligand for the orphan G-protein coupled receptor GPCR135.</title>
        <authorList>
            <person name="Liu C."/>
            <person name="Eriste E."/>
            <person name="Sutton S."/>
            <person name="Chen J."/>
            <person name="Roland B."/>
            <person name="Kuei C."/>
            <person name="Farmer N."/>
            <person name="Joernvall H."/>
            <person name="Sillard R."/>
            <person name="Lovenberg T.W."/>
        </authorList>
    </citation>
    <scope>PROTEIN SEQUENCE OF 27-53 AND 117-140</scope>
    <scope>INTERACTION WITH RELAXIN-3 RECEPTOR-1</scope>
</reference>
<name>REL3_PIG</name>
<protein>
    <recommendedName>
        <fullName>Relaxin-3</fullName>
    </recommendedName>
    <alternativeName>
        <fullName>Insulin-like peptide INSL7</fullName>
        <shortName>Insulin-like peptide 7</shortName>
    </alternativeName>
    <component>
        <recommendedName>
            <fullName>Relaxin-3 B chain</fullName>
        </recommendedName>
    </component>
    <component>
        <recommendedName>
            <fullName>Relaxin-3 A chain</fullName>
        </recommendedName>
    </component>
</protein>
<dbReference type="EMBL" id="AB076661">
    <property type="protein sequence ID" value="BAC53769.1"/>
    <property type="molecule type" value="Genomic_DNA"/>
</dbReference>
<dbReference type="EMBL" id="DQ974115">
    <property type="protein sequence ID" value="ABJ98405.1"/>
    <property type="molecule type" value="Genomic_DNA"/>
</dbReference>
<dbReference type="RefSeq" id="NP_001039144.1">
    <property type="nucleotide sequence ID" value="NM_001045679.1"/>
</dbReference>
<dbReference type="RefSeq" id="XP_013850120.1">
    <property type="nucleotide sequence ID" value="XM_013994666.2"/>
</dbReference>
<dbReference type="RefSeq" id="XP_013850121.1">
    <property type="nucleotide sequence ID" value="XM_013994667.1"/>
</dbReference>
<dbReference type="RefSeq" id="XP_020937654.1">
    <property type="nucleotide sequence ID" value="XM_021081995.1"/>
</dbReference>
<dbReference type="SMR" id="Q8HY17"/>
<dbReference type="FunCoup" id="Q8HY17">
    <property type="interactions" value="391"/>
</dbReference>
<dbReference type="STRING" id="9823.ENSSSCP00000014634"/>
<dbReference type="PaxDb" id="9823-ENSSSCP00000014634"/>
<dbReference type="Ensembl" id="ENSSSCT00000015039.6">
    <property type="protein sequence ID" value="ENSSSCP00000014634.2"/>
    <property type="gene ID" value="ENSSSCG00000013765.6"/>
</dbReference>
<dbReference type="Ensembl" id="ENSSSCT00035070298.1">
    <property type="protein sequence ID" value="ENSSSCP00035028515.1"/>
    <property type="gene ID" value="ENSSSCG00035052734.1"/>
</dbReference>
<dbReference type="Ensembl" id="ENSSSCT00040105672.1">
    <property type="protein sequence ID" value="ENSSSCP00040048442.1"/>
    <property type="gene ID" value="ENSSSCG00040075986.1"/>
</dbReference>
<dbReference type="Ensembl" id="ENSSSCT00055003339.1">
    <property type="protein sequence ID" value="ENSSSCP00055002505.1"/>
    <property type="gene ID" value="ENSSSCG00055001823.1"/>
</dbReference>
<dbReference type="Ensembl" id="ENSSSCT00070001253.1">
    <property type="protein sequence ID" value="ENSSSCP00070001097.1"/>
    <property type="gene ID" value="ENSSSCG00070000670.1"/>
</dbReference>
<dbReference type="Ensembl" id="ENSSSCT00105074903">
    <property type="protein sequence ID" value="ENSSSCP00105053023"/>
    <property type="gene ID" value="ENSSSCG00105039315"/>
</dbReference>
<dbReference type="Ensembl" id="ENSSSCT00110047765">
    <property type="protein sequence ID" value="ENSSSCP00110033603"/>
    <property type="gene ID" value="ENSSSCG00110024767"/>
</dbReference>
<dbReference type="Ensembl" id="ENSSSCT00130075217">
    <property type="protein sequence ID" value="ENSSSCP00130054137"/>
    <property type="gene ID" value="ENSSSCG00130038574"/>
</dbReference>
<dbReference type="GeneID" id="503836"/>
<dbReference type="KEGG" id="ssc:503836"/>
<dbReference type="CTD" id="117579"/>
<dbReference type="VGNC" id="VGNC:92329">
    <property type="gene designation" value="RLN3"/>
</dbReference>
<dbReference type="eggNOG" id="ENOG502S2C4">
    <property type="taxonomic scope" value="Eukaryota"/>
</dbReference>
<dbReference type="GeneTree" id="ENSGT00940000154396"/>
<dbReference type="HOGENOM" id="CLU_120043_0_0_1"/>
<dbReference type="InParanoid" id="Q8HY17"/>
<dbReference type="OMA" id="WGCSKRE"/>
<dbReference type="OrthoDB" id="9443437at2759"/>
<dbReference type="TreeFam" id="TF333404"/>
<dbReference type="Reactome" id="R-SSC-418555">
    <property type="pathway name" value="G alpha (s) signalling events"/>
</dbReference>
<dbReference type="Reactome" id="R-SSC-418594">
    <property type="pathway name" value="G alpha (i) signalling events"/>
</dbReference>
<dbReference type="Reactome" id="R-SSC-444821">
    <property type="pathway name" value="Relaxin receptors"/>
</dbReference>
<dbReference type="Proteomes" id="UP000008227">
    <property type="component" value="Chromosome 2"/>
</dbReference>
<dbReference type="Proteomes" id="UP000314985">
    <property type="component" value="Chromosome 2"/>
</dbReference>
<dbReference type="Proteomes" id="UP000694570">
    <property type="component" value="Unplaced"/>
</dbReference>
<dbReference type="Proteomes" id="UP000694571">
    <property type="component" value="Unplaced"/>
</dbReference>
<dbReference type="Proteomes" id="UP000694720">
    <property type="component" value="Unplaced"/>
</dbReference>
<dbReference type="Proteomes" id="UP000694722">
    <property type="component" value="Unplaced"/>
</dbReference>
<dbReference type="Proteomes" id="UP000694723">
    <property type="component" value="Unplaced"/>
</dbReference>
<dbReference type="Proteomes" id="UP000694724">
    <property type="component" value="Unplaced"/>
</dbReference>
<dbReference type="Proteomes" id="UP000694725">
    <property type="component" value="Unplaced"/>
</dbReference>
<dbReference type="Proteomes" id="UP000694726">
    <property type="component" value="Unplaced"/>
</dbReference>
<dbReference type="Proteomes" id="UP000694727">
    <property type="component" value="Unplaced"/>
</dbReference>
<dbReference type="Proteomes" id="UP000694728">
    <property type="component" value="Unplaced"/>
</dbReference>
<dbReference type="Bgee" id="ENSSSCG00000013765">
    <property type="expression patterns" value="Expressed in testis and 13 other cell types or tissues"/>
</dbReference>
<dbReference type="GO" id="GO:0005576">
    <property type="term" value="C:extracellular region"/>
    <property type="evidence" value="ECO:0007669"/>
    <property type="project" value="UniProtKB-SubCell"/>
</dbReference>
<dbReference type="GO" id="GO:0001664">
    <property type="term" value="F:G protein-coupled receptor binding"/>
    <property type="evidence" value="ECO:0000318"/>
    <property type="project" value="GO_Central"/>
</dbReference>
<dbReference type="GO" id="GO:0005179">
    <property type="term" value="F:hormone activity"/>
    <property type="evidence" value="ECO:0007669"/>
    <property type="project" value="UniProtKB-KW"/>
</dbReference>
<dbReference type="CDD" id="cd04365">
    <property type="entry name" value="IlGF_relaxin_like"/>
    <property type="match status" value="1"/>
</dbReference>
<dbReference type="Gene3D" id="1.10.100.10">
    <property type="entry name" value="Insulin-like"/>
    <property type="match status" value="1"/>
</dbReference>
<dbReference type="InterPro" id="IPR016179">
    <property type="entry name" value="Insulin-like"/>
</dbReference>
<dbReference type="InterPro" id="IPR051777">
    <property type="entry name" value="Insulin-like_neuro_ligands"/>
</dbReference>
<dbReference type="InterPro" id="IPR036438">
    <property type="entry name" value="Insulin-like_sf"/>
</dbReference>
<dbReference type="InterPro" id="IPR022353">
    <property type="entry name" value="Insulin_CS"/>
</dbReference>
<dbReference type="InterPro" id="IPR022352">
    <property type="entry name" value="Insulin_family"/>
</dbReference>
<dbReference type="PANTHER" id="PTHR20968">
    <property type="entry name" value="ILGF DOMAIN-CONTAINING PROTEIN"/>
    <property type="match status" value="1"/>
</dbReference>
<dbReference type="PANTHER" id="PTHR20968:SF0">
    <property type="entry name" value="RELAXIN-3"/>
    <property type="match status" value="1"/>
</dbReference>
<dbReference type="Pfam" id="PF00049">
    <property type="entry name" value="Insulin"/>
    <property type="match status" value="1"/>
</dbReference>
<dbReference type="PRINTS" id="PR00276">
    <property type="entry name" value="INSULINFAMLY"/>
</dbReference>
<dbReference type="SMART" id="SM00078">
    <property type="entry name" value="IlGF"/>
    <property type="match status" value="1"/>
</dbReference>
<dbReference type="SUPFAM" id="SSF56994">
    <property type="entry name" value="Insulin-like"/>
    <property type="match status" value="1"/>
</dbReference>
<dbReference type="PROSITE" id="PS00262">
    <property type="entry name" value="INSULIN"/>
    <property type="match status" value="1"/>
</dbReference>
<evidence type="ECO:0000250" key="1"/>
<evidence type="ECO:0000269" key="2">
    <source>
    </source>
</evidence>
<evidence type="ECO:0000305" key="3"/>
<comment type="function">
    <text evidence="1">May play a role in neuropeptide signaling processes. Ligand for LGR7, RXFP3 and RXFP4 (By similarity).</text>
</comment>
<comment type="subunit">
    <text>Heterodimer of a B chain and an A chain linked by two disulfide bonds.</text>
</comment>
<comment type="subcellular location">
    <subcellularLocation>
        <location>Secreted</location>
    </subcellularLocation>
</comment>
<comment type="similarity">
    <text evidence="3">Belongs to the insulin family.</text>
</comment>
<feature type="signal peptide" evidence="2">
    <location>
        <begin position="1"/>
        <end position="26"/>
    </location>
</feature>
<feature type="peptide" id="PRO_0000016091" description="Relaxin-3 B chain">
    <location>
        <begin position="27"/>
        <end position="53"/>
    </location>
</feature>
<feature type="propeptide" id="PRO_0000016092" description="Connecting peptide" evidence="2">
    <location>
        <begin position="56"/>
        <end position="116"/>
    </location>
</feature>
<feature type="peptide" id="PRO_0000016093" description="Relaxin-3 A chain">
    <location>
        <begin position="117"/>
        <end position="140"/>
    </location>
</feature>
<feature type="disulfide bond" description="Interchain (between B and A chains)" evidence="1">
    <location>
        <begin position="36"/>
        <end position="127"/>
    </location>
</feature>
<feature type="disulfide bond" description="Interchain (between B and A chains)" evidence="1">
    <location>
        <begin position="48"/>
        <end position="140"/>
    </location>
</feature>
<feature type="disulfide bond" evidence="1">
    <location>
        <begin position="126"/>
        <end position="131"/>
    </location>
</feature>
<gene>
    <name type="primary">RLN3</name>
    <name type="synonym">INSL7</name>
</gene>
<proteinExistence type="evidence at protein level"/>